<reference evidence="21" key="1">
    <citation type="journal article" date="2012" name="Cell">
        <title>Tet3 CXXC domain and dioxygenase activity cooperatively regulate key genes for Xenopus eye and neural development.</title>
        <authorList>
            <person name="Xu Y."/>
            <person name="Xu C."/>
            <person name="Kato A."/>
            <person name="Tempel W."/>
            <person name="Abreu J.G."/>
            <person name="Bian C."/>
            <person name="Hu Y."/>
            <person name="Hu D."/>
            <person name="Zhao B."/>
            <person name="Cerovina T."/>
            <person name="Diao J."/>
            <person name="Wu F."/>
            <person name="He H.H."/>
            <person name="Cui Q."/>
            <person name="Clark E."/>
            <person name="Ma C."/>
            <person name="Barbara A."/>
            <person name="Veenstra G.J.C."/>
            <person name="Xu G."/>
            <person name="Kaiser U.B."/>
            <person name="Liu X.S."/>
            <person name="Sugrue S.P."/>
            <person name="He X."/>
            <person name="Min J."/>
            <person name="Kato Y."/>
            <person name="Shi Y.G."/>
        </authorList>
    </citation>
    <scope>NUCLEOTIDE SEQUENCE [MRNA] (ISOFORMS 1 AND 3)</scope>
    <source>
        <strain evidence="21">129/Ola</strain>
    </source>
</reference>
<reference evidence="22" key="2">
    <citation type="journal article" date="2013" name="PLoS ONE">
        <title>Intrinsic and extrinsic connections of Tet3 dioxygenase with CXXC zinc finger modules.</title>
        <authorList>
            <person name="Liu N."/>
            <person name="Wang M."/>
            <person name="Deng W."/>
            <person name="Schmidt C.S."/>
            <person name="Qin W."/>
            <person name="Leonhardt H."/>
            <person name="Spada F."/>
        </authorList>
    </citation>
    <scope>NUCLEOTIDE SEQUENCE [MRNA] (ISOFORM 3)</scope>
    <scope>FUNCTION</scope>
    <scope>CATALYTIC ACTIVITY</scope>
    <scope>DNA-BINDING</scope>
    <source>
        <strain evidence="22">129/Ola</strain>
    </source>
</reference>
<reference key="3">
    <citation type="journal article" date="2005" name="Science">
        <title>The transcriptional landscape of the mammalian genome.</title>
        <authorList>
            <person name="Carninci P."/>
            <person name="Kasukawa T."/>
            <person name="Katayama S."/>
            <person name="Gough J."/>
            <person name="Frith M.C."/>
            <person name="Maeda N."/>
            <person name="Oyama R."/>
            <person name="Ravasi T."/>
            <person name="Lenhard B."/>
            <person name="Wells C."/>
            <person name="Kodzius R."/>
            <person name="Shimokawa K."/>
            <person name="Bajic V.B."/>
            <person name="Brenner S.E."/>
            <person name="Batalov S."/>
            <person name="Forrest A.R."/>
            <person name="Zavolan M."/>
            <person name="Davis M.J."/>
            <person name="Wilming L.G."/>
            <person name="Aidinis V."/>
            <person name="Allen J.E."/>
            <person name="Ambesi-Impiombato A."/>
            <person name="Apweiler R."/>
            <person name="Aturaliya R.N."/>
            <person name="Bailey T.L."/>
            <person name="Bansal M."/>
            <person name="Baxter L."/>
            <person name="Beisel K.W."/>
            <person name="Bersano T."/>
            <person name="Bono H."/>
            <person name="Chalk A.M."/>
            <person name="Chiu K.P."/>
            <person name="Choudhary V."/>
            <person name="Christoffels A."/>
            <person name="Clutterbuck D.R."/>
            <person name="Crowe M.L."/>
            <person name="Dalla E."/>
            <person name="Dalrymple B.P."/>
            <person name="de Bono B."/>
            <person name="Della Gatta G."/>
            <person name="di Bernardo D."/>
            <person name="Down T."/>
            <person name="Engstrom P."/>
            <person name="Fagiolini M."/>
            <person name="Faulkner G."/>
            <person name="Fletcher C.F."/>
            <person name="Fukushima T."/>
            <person name="Furuno M."/>
            <person name="Futaki S."/>
            <person name="Gariboldi M."/>
            <person name="Georgii-Hemming P."/>
            <person name="Gingeras T.R."/>
            <person name="Gojobori T."/>
            <person name="Green R.E."/>
            <person name="Gustincich S."/>
            <person name="Harbers M."/>
            <person name="Hayashi Y."/>
            <person name="Hensch T.K."/>
            <person name="Hirokawa N."/>
            <person name="Hill D."/>
            <person name="Huminiecki L."/>
            <person name="Iacono M."/>
            <person name="Ikeo K."/>
            <person name="Iwama A."/>
            <person name="Ishikawa T."/>
            <person name="Jakt M."/>
            <person name="Kanapin A."/>
            <person name="Katoh M."/>
            <person name="Kawasawa Y."/>
            <person name="Kelso J."/>
            <person name="Kitamura H."/>
            <person name="Kitano H."/>
            <person name="Kollias G."/>
            <person name="Krishnan S.P."/>
            <person name="Kruger A."/>
            <person name="Kummerfeld S.K."/>
            <person name="Kurochkin I.V."/>
            <person name="Lareau L.F."/>
            <person name="Lazarevic D."/>
            <person name="Lipovich L."/>
            <person name="Liu J."/>
            <person name="Liuni S."/>
            <person name="McWilliam S."/>
            <person name="Madan Babu M."/>
            <person name="Madera M."/>
            <person name="Marchionni L."/>
            <person name="Matsuda H."/>
            <person name="Matsuzawa S."/>
            <person name="Miki H."/>
            <person name="Mignone F."/>
            <person name="Miyake S."/>
            <person name="Morris K."/>
            <person name="Mottagui-Tabar S."/>
            <person name="Mulder N."/>
            <person name="Nakano N."/>
            <person name="Nakauchi H."/>
            <person name="Ng P."/>
            <person name="Nilsson R."/>
            <person name="Nishiguchi S."/>
            <person name="Nishikawa S."/>
            <person name="Nori F."/>
            <person name="Ohara O."/>
            <person name="Okazaki Y."/>
            <person name="Orlando V."/>
            <person name="Pang K.C."/>
            <person name="Pavan W.J."/>
            <person name="Pavesi G."/>
            <person name="Pesole G."/>
            <person name="Petrovsky N."/>
            <person name="Piazza S."/>
            <person name="Reed J."/>
            <person name="Reid J.F."/>
            <person name="Ring B.Z."/>
            <person name="Ringwald M."/>
            <person name="Rost B."/>
            <person name="Ruan Y."/>
            <person name="Salzberg S.L."/>
            <person name="Sandelin A."/>
            <person name="Schneider C."/>
            <person name="Schoenbach C."/>
            <person name="Sekiguchi K."/>
            <person name="Semple C.A."/>
            <person name="Seno S."/>
            <person name="Sessa L."/>
            <person name="Sheng Y."/>
            <person name="Shibata Y."/>
            <person name="Shimada H."/>
            <person name="Shimada K."/>
            <person name="Silva D."/>
            <person name="Sinclair B."/>
            <person name="Sperling S."/>
            <person name="Stupka E."/>
            <person name="Sugiura K."/>
            <person name="Sultana R."/>
            <person name="Takenaka Y."/>
            <person name="Taki K."/>
            <person name="Tammoja K."/>
            <person name="Tan S.L."/>
            <person name="Tang S."/>
            <person name="Taylor M.S."/>
            <person name="Tegner J."/>
            <person name="Teichmann S.A."/>
            <person name="Ueda H.R."/>
            <person name="van Nimwegen E."/>
            <person name="Verardo R."/>
            <person name="Wei C.L."/>
            <person name="Yagi K."/>
            <person name="Yamanishi H."/>
            <person name="Zabarovsky E."/>
            <person name="Zhu S."/>
            <person name="Zimmer A."/>
            <person name="Hide W."/>
            <person name="Bult C."/>
            <person name="Grimmond S.M."/>
            <person name="Teasdale R.D."/>
            <person name="Liu E.T."/>
            <person name="Brusic V."/>
            <person name="Quackenbush J."/>
            <person name="Wahlestedt C."/>
            <person name="Mattick J.S."/>
            <person name="Hume D.A."/>
            <person name="Kai C."/>
            <person name="Sasaki D."/>
            <person name="Tomaru Y."/>
            <person name="Fukuda S."/>
            <person name="Kanamori-Katayama M."/>
            <person name="Suzuki M."/>
            <person name="Aoki J."/>
            <person name="Arakawa T."/>
            <person name="Iida J."/>
            <person name="Imamura K."/>
            <person name="Itoh M."/>
            <person name="Kato T."/>
            <person name="Kawaji H."/>
            <person name="Kawagashira N."/>
            <person name="Kawashima T."/>
            <person name="Kojima M."/>
            <person name="Kondo S."/>
            <person name="Konno H."/>
            <person name="Nakano K."/>
            <person name="Ninomiya N."/>
            <person name="Nishio T."/>
            <person name="Okada M."/>
            <person name="Plessy C."/>
            <person name="Shibata K."/>
            <person name="Shiraki T."/>
            <person name="Suzuki S."/>
            <person name="Tagami M."/>
            <person name="Waki K."/>
            <person name="Watahiki A."/>
            <person name="Okamura-Oho Y."/>
            <person name="Suzuki H."/>
            <person name="Kawai J."/>
            <person name="Hayashizaki Y."/>
        </authorList>
    </citation>
    <scope>NUCLEOTIDE SEQUENCE [LARGE SCALE MRNA] (ISOFORM 2)</scope>
    <source>
        <strain>C57BL/6J</strain>
        <tissue>Adipose tissue</tissue>
        <tissue>Retina</tissue>
    </source>
</reference>
<reference key="4">
    <citation type="journal article" date="2009" name="PLoS Biol.">
        <title>Lineage-specific biology revealed by a finished genome assembly of the mouse.</title>
        <authorList>
            <person name="Church D.M."/>
            <person name="Goodstadt L."/>
            <person name="Hillier L.W."/>
            <person name="Zody M.C."/>
            <person name="Goldstein S."/>
            <person name="She X."/>
            <person name="Bult C.J."/>
            <person name="Agarwala R."/>
            <person name="Cherry J.L."/>
            <person name="DiCuccio M."/>
            <person name="Hlavina W."/>
            <person name="Kapustin Y."/>
            <person name="Meric P."/>
            <person name="Maglott D."/>
            <person name="Birtle Z."/>
            <person name="Marques A.C."/>
            <person name="Graves T."/>
            <person name="Zhou S."/>
            <person name="Teague B."/>
            <person name="Potamousis K."/>
            <person name="Churas C."/>
            <person name="Place M."/>
            <person name="Herschleb J."/>
            <person name="Runnheim R."/>
            <person name="Forrest D."/>
            <person name="Amos-Landgraf J."/>
            <person name="Schwartz D.C."/>
            <person name="Cheng Z."/>
            <person name="Lindblad-Toh K."/>
            <person name="Eichler E.E."/>
            <person name="Ponting C.P."/>
        </authorList>
    </citation>
    <scope>NUCLEOTIDE SEQUENCE [LARGE SCALE GENOMIC DNA]</scope>
    <source>
        <strain>C57BL/6J</strain>
    </source>
</reference>
<reference key="5">
    <citation type="journal article" date="2004" name="Genome Res.">
        <title>The status, quality, and expansion of the NIH full-length cDNA project: the Mammalian Gene Collection (MGC).</title>
        <authorList>
            <consortium name="The MGC Project Team"/>
        </authorList>
    </citation>
    <scope>NUCLEOTIDE SEQUENCE [LARGE SCALE MRNA] OF 892-1688 (ISOFORMS 1/3)</scope>
    <source>
        <strain>C57BL/6J</strain>
        <tissue>Egg</tissue>
    </source>
</reference>
<reference key="6">
    <citation type="journal article" date="2010" name="Nature">
        <title>Role of Tet proteins in 5mC to 5hmC conversion, ES-cell self-renewal and inner cell mass specification.</title>
        <authorList>
            <person name="Ito S."/>
            <person name="D'Alessio A.C."/>
            <person name="Taranova O.V."/>
            <person name="Hong K."/>
            <person name="Sowers L.C."/>
            <person name="Zhang Y."/>
        </authorList>
    </citation>
    <scope>FUNCTION</scope>
    <scope>CATALYTIC ACTIVITY</scope>
    <scope>TISSUE SPECIFICITY</scope>
    <scope>MUTAGENESIS OF HIS-1085 AND ASP-1087</scope>
</reference>
<reference key="7">
    <citation type="journal article" date="2011" name="Nature">
        <title>The role of Tet3 DNA dioxygenase in epigenetic reprogramming by oocytes.</title>
        <authorList>
            <person name="Gu T.P."/>
            <person name="Guo F."/>
            <person name="Yang H."/>
            <person name="Wu H.P."/>
            <person name="Xu G.F."/>
            <person name="Liu W."/>
            <person name="Xie Z.G."/>
            <person name="Shi L."/>
            <person name="He X."/>
            <person name="Jin S.G."/>
            <person name="Iqbal K."/>
            <person name="Shi Y.G."/>
            <person name="Deng Z."/>
            <person name="Szabo P.E."/>
            <person name="Pfeifer G.P."/>
            <person name="Li J."/>
            <person name="Xu G.L."/>
        </authorList>
    </citation>
    <scope>FUNCTION</scope>
    <scope>SUBCELLULAR LOCATION</scope>
    <scope>TISSUE SPECIFICITY</scope>
    <scope>DISRUPTION PHENOTYPE</scope>
</reference>
<reference key="8">
    <citation type="journal article" date="2011" name="Nat. Commun.">
        <title>5-Hydroxymethylcytosine in the mammalian zygote is linked with epigenetic reprogramming.</title>
        <authorList>
            <person name="Wossidlo M."/>
            <person name="Nakamura T."/>
            <person name="Lepikhov K."/>
            <person name="Marques C.J."/>
            <person name="Zakhartchenko V."/>
            <person name="Boiani M."/>
            <person name="Arand J."/>
            <person name="Nakano T."/>
            <person name="Reik W."/>
            <person name="Walter J."/>
        </authorList>
    </citation>
    <scope>FUNCTION</scope>
    <scope>TISSUE SPECIFICITY</scope>
    <scope>DEVELOPMENTAL STAGE</scope>
</reference>
<reference key="9">
    <citation type="journal article" date="2011" name="Proc. Natl. Acad. Sci. U.S.A.">
        <title>Reprogramming of the paternal genome upon fertilization involves genome-wide oxidation of 5-methylcytosine.</title>
        <authorList>
            <person name="Iqbal K."/>
            <person name="Jin S.G."/>
            <person name="Pfeifer G.P."/>
            <person name="Szabo P.E."/>
        </authorList>
    </citation>
    <scope>TISSUE SPECIFICITY</scope>
    <scope>DEVELOPMENTAL STAGE</scope>
</reference>
<reference key="10">
    <citation type="journal article" date="2011" name="Science">
        <title>Tet proteins can convert 5-methylcytosine to 5-formylcytosine and 5-carboxylcytosine.</title>
        <authorList>
            <person name="Ito S."/>
            <person name="Shen L."/>
            <person name="Dai Q."/>
            <person name="Wu S.C."/>
            <person name="Collins L.B."/>
            <person name="Swenberg J.A."/>
            <person name="He C."/>
            <person name="Zhang Y."/>
        </authorList>
    </citation>
    <scope>FUNCTION</scope>
    <scope>CATALYTIC ACTIVITY</scope>
    <scope>MUTAGENESIS OF HIS-1085 AND ASP-1087</scope>
</reference>
<reference key="11">
    <citation type="journal article" date="2012" name="Nature">
        <title>PGC7 binds histone H3K9me2 to protect against conversion of 5mC to 5hmC in early embryos.</title>
        <authorList>
            <person name="Nakamura T."/>
            <person name="Liu Y.J."/>
            <person name="Nakashima H."/>
            <person name="Umehara H."/>
            <person name="Inoue K."/>
            <person name="Matoba S."/>
            <person name="Tachibana M."/>
            <person name="Ogura A."/>
            <person name="Shinkai Y."/>
            <person name="Nakano T."/>
        </authorList>
    </citation>
    <scope>FUNCTION</scope>
</reference>
<reference key="12">
    <citation type="journal article" date="2012" name="Nature">
        <title>Tet1 controls meiosis by regulating meiotic gene expression.</title>
        <authorList>
            <person name="Yamaguchi S."/>
            <person name="Hong K."/>
            <person name="Liu R."/>
            <person name="Shen L."/>
            <person name="Inoue A."/>
            <person name="Diep D."/>
            <person name="Zhang K."/>
            <person name="Zhang Y."/>
        </authorList>
    </citation>
    <scope>DEVELOPMENTAL STAGE</scope>
</reference>
<reference key="13">
    <citation type="journal article" date="2013" name="Science">
        <title>CRL4 complex regulates mammalian oocyte survival and reprogramming by activation of TET proteins.</title>
        <authorList>
            <person name="Yu C."/>
            <person name="Zhang Y.L."/>
            <person name="Pan W.W."/>
            <person name="Li X.M."/>
            <person name="Wang Z.W."/>
            <person name="Ge Z.J."/>
            <person name="Zhou J.J."/>
            <person name="Cang Y."/>
            <person name="Tong C."/>
            <person name="Sun Q.Y."/>
            <person name="Fan H.Y."/>
        </authorList>
    </citation>
    <scope>TISSUE SPECIFICITY</scope>
    <scope>DEVELOPMENTAL STAGE</scope>
</reference>
<reference key="14">
    <citation type="journal article" date="2014" name="Mol. Cell. Proteomics">
        <title>Immunoaffinity enrichment and mass spectrometry analysis of protein methylation.</title>
        <authorList>
            <person name="Guo A."/>
            <person name="Gu H."/>
            <person name="Zhou J."/>
            <person name="Mulhern D."/>
            <person name="Wang Y."/>
            <person name="Lee K.A."/>
            <person name="Yang V."/>
            <person name="Aguiar M."/>
            <person name="Kornhauser J."/>
            <person name="Jia X."/>
            <person name="Ren J."/>
            <person name="Beausoleil S.A."/>
            <person name="Silva J.C."/>
            <person name="Vemulapalli V."/>
            <person name="Bedford M.T."/>
            <person name="Comb M.J."/>
        </authorList>
    </citation>
    <scope>METHYLATION [LARGE SCALE ANALYSIS] AT ARG-1271</scope>
    <scope>IDENTIFICATION BY MASS SPECTROMETRY [LARGE SCALE ANALYSIS]</scope>
    <source>
        <tissue>Embryo</tissue>
    </source>
</reference>
<reference key="15">
    <citation type="journal article" date="2015" name="Mol. Cell">
        <title>CRL4(VprBP) E3 ligase promotes monoubiquitylation and chromatin binding of TET dioxygenases.</title>
        <authorList>
            <person name="Nakagawa T."/>
            <person name="Lv L."/>
            <person name="Nakagawa M."/>
            <person name="Yu Y."/>
            <person name="Yu C."/>
            <person name="D'Alessio A.C."/>
            <person name="Nakayama K."/>
            <person name="Fan H.Y."/>
            <person name="Chen X."/>
            <person name="Xiong Y."/>
        </authorList>
    </citation>
    <scope>INTERACTION WITH DCAF1</scope>
    <scope>MONOUBIQUITINATION AT LYS-1002</scope>
    <scope>MUTAGENESIS OF LYS-1002</scope>
    <scope>SUBCELLULAR LOCATION</scope>
</reference>
<reference key="16">
    <citation type="journal article" date="2017" name="Cell Rep.">
        <title>Histone H3 methylated at arginine 17 is essential for reprogramming the paternal genome in zygotes.</title>
        <authorList>
            <person name="Hatanaka Y."/>
            <person name="Tsusaka T."/>
            <person name="Shimizu N."/>
            <person name="Morita K."/>
            <person name="Suzuki T."/>
            <person name="Machida S."/>
            <person name="Satoh M."/>
            <person name="Honda A."/>
            <person name="Hirose M."/>
            <person name="Kamimura S."/>
            <person name="Ogonuki N."/>
            <person name="Nakamura T."/>
            <person name="Inoue K."/>
            <person name="Hosoi Y."/>
            <person name="Dohmae N."/>
            <person name="Nakano T."/>
            <person name="Kurumizaka H."/>
            <person name="Matsumoto K."/>
            <person name="Shinkai Y."/>
            <person name="Ogura A."/>
        </authorList>
    </citation>
    <scope>SUBCELLULAR LOCATION</scope>
</reference>
<reference evidence="23" key="17">
    <citation type="journal article" date="2016" name="Cell Rep.">
        <title>Tet3 reads 5-carboxylcytosine through its CXXC domain and is a potential guardian against neurodegeneration.</title>
        <authorList>
            <person name="Jin S.G."/>
            <person name="Zhang Z.M."/>
            <person name="Dunwell T.L."/>
            <person name="Harter M.R."/>
            <person name="Wu X."/>
            <person name="Johnson J."/>
            <person name="Li Z."/>
            <person name="Liu J."/>
            <person name="Szabo P.E."/>
            <person name="Lu Q."/>
            <person name="Xu G.L."/>
            <person name="Song J."/>
            <person name="Pfeifer G.P."/>
        </authorList>
    </citation>
    <scope>X-RAY CRYSTALLOGRAPHY (1.30 ANGSTROMS) OF 51-96 IN COMPLEX WITH ZINC AND DNA</scope>
    <scope>FUNCTION</scope>
    <scope>CATALYTIC ACTIVITY</scope>
    <scope>SUBCELLULAR LOCATION</scope>
    <scope>ALTERNATIVE SPLICING</scope>
    <scope>DOMAIN</scope>
    <scope>TISSUE SPECIFICITY</scope>
</reference>
<keyword id="KW-0002">3D-structure</keyword>
<keyword id="KW-0025">Alternative splicing</keyword>
<keyword id="KW-0156">Chromatin regulator</keyword>
<keyword id="KW-0158">Chromosome</keyword>
<keyword id="KW-0963">Cytoplasm</keyword>
<keyword id="KW-0217">Developmental protein</keyword>
<keyword id="KW-0223">Dioxygenase</keyword>
<keyword id="KW-0238">DNA-binding</keyword>
<keyword id="KW-0408">Iron</keyword>
<keyword id="KW-1017">Isopeptide bond</keyword>
<keyword id="KW-0479">Metal-binding</keyword>
<keyword id="KW-0488">Methylation</keyword>
<keyword id="KW-0539">Nucleus</keyword>
<keyword id="KW-0560">Oxidoreductase</keyword>
<keyword id="KW-1185">Reference proteome</keyword>
<keyword id="KW-0832">Ubl conjugation</keyword>
<keyword id="KW-0862">Zinc</keyword>
<keyword id="KW-0863">Zinc-finger</keyword>
<comment type="function">
    <text evidence="1 5 7 8 9 10 12 15">Dioxygenase that catalyzes the conversion of the modified genomic base 5-methylcytosine (5mC) into 5-hydroxymethylcytosine (5hmC) and plays a key role in epigenetic chromatin reprogramming in the zygote following fertilization. Also mediates subsequent conversion of 5hmC into 5-formylcytosine (5fC), and conversion of 5fC to 5-carboxylcytosine (5caC). Conversion of 5mC into 5hmC, 5fC and 5caC probably constitutes the first step in cytosine demethylation. Selectively binds to the promoter region of target genes and contributes to regulate the expression of numerous developmental genes. In zygotes, DNA demethylation occurs selectively in the paternal pronucleus before the first cell division, while the adjacent maternal pronucleus and certain paternally-imprinted loci are protected from this process. Participates in DNA demethylation in the paternal pronucleus by mediating conversion of 5mC into 5hmC, 5fC and 5caC. Does not mediate DNA demethylation of maternal pronucleus because of the presence of DPPA3/PGC7 on maternal chromatin that prevents TET3-binding to chromatin. In addition to its role in DNA demethylation, also involved in the recruitment of the O-GlcNAc transferase OGT to CpG-rich transcription start sites of active genes, thereby promoting histone H2B GlcNAcylation by OGT. Binds preferentially to DNA containing cytidine-phosphate-guanosine (CpG) dinucleotides over CpH (H=A, T, and C), hemimethylated-CpG and hemimethylated-hydroxymethyl-CpG (By similarity).</text>
</comment>
<comment type="catalytic activity">
    <reaction evidence="5 8 12 15">
        <text>a 5-methyl-2'-deoxycytidine in DNA + 2-oxoglutarate + O2 = a 5-hydroxymethyl-2'-deoxycytidine in DNA + succinate + CO2</text>
        <dbReference type="Rhea" id="RHEA:52636"/>
        <dbReference type="Rhea" id="RHEA-COMP:11370"/>
        <dbReference type="Rhea" id="RHEA-COMP:13315"/>
        <dbReference type="ChEBI" id="CHEBI:15379"/>
        <dbReference type="ChEBI" id="CHEBI:16526"/>
        <dbReference type="ChEBI" id="CHEBI:16810"/>
        <dbReference type="ChEBI" id="CHEBI:30031"/>
        <dbReference type="ChEBI" id="CHEBI:85454"/>
        <dbReference type="ChEBI" id="CHEBI:136731"/>
        <dbReference type="EC" id="1.14.11.80"/>
    </reaction>
</comment>
<comment type="catalytic activity">
    <reaction evidence="8 15">
        <text>a 5-hydroxymethyl-2'-deoxycytidine in DNA + 2-oxoglutarate + O2 = a 5-formyl-2'-deoxycytidine in DNA + succinate + CO2 + H2O</text>
        <dbReference type="Rhea" id="RHEA:53828"/>
        <dbReference type="Rhea" id="RHEA-COMP:13315"/>
        <dbReference type="Rhea" id="RHEA-COMP:13656"/>
        <dbReference type="ChEBI" id="CHEBI:15377"/>
        <dbReference type="ChEBI" id="CHEBI:15379"/>
        <dbReference type="ChEBI" id="CHEBI:16526"/>
        <dbReference type="ChEBI" id="CHEBI:16810"/>
        <dbReference type="ChEBI" id="CHEBI:30031"/>
        <dbReference type="ChEBI" id="CHEBI:136731"/>
        <dbReference type="ChEBI" id="CHEBI:137731"/>
        <dbReference type="EC" id="1.14.11.80"/>
    </reaction>
</comment>
<comment type="catalytic activity">
    <reaction evidence="8 15">
        <text>a 5-formyl-2'-deoxycytidine in DNA + 2-oxoglutarate + O2 = a 5-carboxyl-2'-deoxycytidine in DNA + succinate + CO2 + H(+)</text>
        <dbReference type="Rhea" id="RHEA:53832"/>
        <dbReference type="Rhea" id="RHEA-COMP:13656"/>
        <dbReference type="Rhea" id="RHEA-COMP:13657"/>
        <dbReference type="ChEBI" id="CHEBI:15378"/>
        <dbReference type="ChEBI" id="CHEBI:15379"/>
        <dbReference type="ChEBI" id="CHEBI:16526"/>
        <dbReference type="ChEBI" id="CHEBI:16810"/>
        <dbReference type="ChEBI" id="CHEBI:30031"/>
        <dbReference type="ChEBI" id="CHEBI:137731"/>
        <dbReference type="ChEBI" id="CHEBI:137732"/>
        <dbReference type="EC" id="1.14.11.80"/>
    </reaction>
</comment>
<comment type="cofactor">
    <cofactor evidence="2">
        <name>Fe(2+)</name>
        <dbReference type="ChEBI" id="CHEBI:29033"/>
    </cofactor>
    <text evidence="2">Binds 1 Fe(2+) ion per subunit.</text>
</comment>
<comment type="cofactor">
    <cofactor evidence="2">
        <name>Zn(2+)</name>
        <dbReference type="ChEBI" id="CHEBI:29105"/>
    </cofactor>
    <text evidence="2">The zinc ions have a structural role.</text>
</comment>
<comment type="subunit">
    <text evidence="1">Interacts with HCFC1 (By similarity). Interacts with OGT (By similarity). Directly interacts (via C-terminus) with the DCAF1 component of the CRL4(VprBP) E3 ubiquitin-protein ligase complex (By similarity).</text>
</comment>
<comment type="interaction">
    <interactant intactId="EBI-9031997">
        <id>Q8BG87</id>
    </interactant>
    <interactant intactId="EBI-539828">
        <id>O15294</id>
        <label>OGT</label>
    </interactant>
    <organismsDiffer>true</organismsDiffer>
    <experiments>2</experiments>
</comment>
<comment type="subcellular location">
    <subcellularLocation>
        <location evidence="9 14 15 16">Nucleus</location>
    </subcellularLocation>
    <subcellularLocation>
        <location evidence="15">Chromosome</location>
    </subcellularLocation>
    <subcellularLocation>
        <location evidence="9">Cytoplasm</location>
    </subcellularLocation>
    <text evidence="9 15 16">At the zygotic stage, localizes in the male and female pronucleus, while it localizes to the cytoplasm at other preimplantation stages (PubMed:21892189, PubMed:28930672). Binds to the promoter of target genes, close to the transcription start site (PubMed:26774490).</text>
</comment>
<comment type="alternative products">
    <event type="alternative splicing"/>
    <isoform>
        <id>Q8BG87-1</id>
        <name>3</name>
        <sequence type="displayed"/>
    </isoform>
    <isoform>
        <id>Q8BG87-2</id>
        <name>2</name>
        <sequence type="described" ref="VSP_060404 VSP_060406 VSP_060407"/>
    </isoform>
    <isoform>
        <id>Q8BG87-4</id>
        <name>1</name>
        <sequence type="described" ref="VSP_060405"/>
    </isoform>
</comment>
<comment type="tissue specificity">
    <text evidence="5 6 7 9 13 15">Highly expressed in germinal vesicle (GV) stage and MII-stage oocytes and in early embryos.</text>
</comment>
<comment type="developmental stage">
    <text evidence="6 7 11 13">Expressed maternally. Expressed at high levels in germinal vesicle (GV) stage and MII-stage oocytes. Expressed at lower levels in one-cell embryos until 4-cell stage. Hardly detectable in morula. Expressed mainly in somatic cells from 9.5 dpc until at least 16.5 dpc. Expression in primordial germ cells is undetectable until 13.5 dpc and peaks at 16.5 dpc (PubMed:23151479).</text>
</comment>
<comment type="domain">
    <text evidence="1 15">The CXXC-type zinc-finger domain mediates binding to DNA sequences containing unmethylated cytosine or 5-carboxylcytosine in 5'-CCG-3' DNA sequence motifs (PubMed:26774490). It mediates binding to CpG-DNA (By similarity).</text>
</comment>
<comment type="PTM">
    <text evidence="14">Monoubiquitinated at Lys-1002 by the DCX (DDB1-CUL4-X-box) E3 ubiquitin-protein ligase complex called CRL4(VprBP) or CUL4A-RBX1-DDB1-DCAF1/VPRBP complex; this modification promotes binding to DNA.</text>
</comment>
<comment type="disruption phenotype">
    <text evidence="9">Neonatal lethality. A germline-specific conditional knockout produces females that are normal in growth and morphology but display much reduced fecundity in terms of the frequency of successful pregnancy per mating and the litter size. No 5hmC signal is detected in the late male pronuclei of zygotes collected from the conditional knockout females mated with wild-type males. In contrast, deletion of Tet3 from the male germ cells does not seem to affect the change in 5hmC and 5mC.</text>
</comment>
<comment type="similarity">
    <text evidence="20">Belongs to the TET family.</text>
</comment>
<comment type="caution">
    <text evidence="20">Subsequent steps in cytosine demethylation are subject to discussion. According to a first model cytosine demethylation occurs through deamination of 5hmC into 5-hydroxymethyluracil (5hmU) and subsequent replacement by unmethylated cytosine by the base excision repair system. According to another model, cytosine demethylation is rather mediated via conversion of 5hmC into 5fC and 5caC, followed by excision by TDG.</text>
</comment>
<comment type="sequence caution" evidence="20">
    <conflict type="erroneous initiation">
        <sequence resource="EMBL-CDS" id="AAH96437"/>
    </conflict>
    <text>Truncated N-terminus.</text>
</comment>
<comment type="sequence caution" evidence="20">
    <conflict type="miscellaneous discrepancy">
        <sequence resource="EMBL-CDS" id="AAH96437"/>
    </conflict>
    <text>Contaminating sequence. Potential poly-A sequence.</text>
</comment>
<accession>Q8BG87</accession>
<accession>K9JH93</accession>
<accession>L0HN04</accession>
<accession>Q4VAD3</accession>
<accession>Q8C8N8</accession>
<accession>Q8CI60</accession>
<sequence>MSQFQVPLAVQPDLSGLYDFPQGQVMVGGFQGPGLPMAGSETQLRGGGDGRKKRKRCGTCDPCRRLENCGSCTSCTNRRTHQICKLRKCEVLKKKAGLLKEVEINAREGTGPWAQGATVKTGSELSPVDGPVPGQMDSGPVYHGDSRQLSTSGAPVNGAREPAGPGLLGAAGPWRVDQKPDWEAASGPTHAARLEDAHDLVAFSAVAEAVSSYGALSTRLYETFNREMSREAGSNGRGPRPESCSEGSEDLDTLQTALALARHGMKPPNCTCDGPECPDFLEWLEGKIKSMAMEGGQGRPRLPGALPPSEAGLPAPSTRPPLLSSEVPQVPPLEGLPLSQSALSIAKEKNISLQTAIAIEALTQLSSALPQPSHSTSQASCPLPEALSPSAPFRSPQSYLRAPSWPVVPPEEHPSFAPDSPAFPPATPRPEFSEAWGTDTPPATPRNSWPVPRPSPDPMAELEQLLGSASDYIQSVFKRPEALPTKPKVKVEAPSSSPAPVPSPISQREAPLLSSEPDTHQKAQTALQQHLHHKRNLFLEQAQDASFPTSTEPQAPGWWAPPGSPAPRPPDKPPKEKKKKPPTPAGGPVGAEKTTPGIKTSVRKPIQIKKSRSRDMQPLFLPVRQIVLEGLKPQASEGQAPLPAQLSVPPPASQGAASQSCATPLTPEPSLALFAPSPSGDSLLPPTQEMRSPSPMVALQSGSTGGPLPPADDKLEELIRQFEAEFGDSFGLPGPPSVPIQEPENQSTCLPAPESPFATRSPKKIKIESSGAVTVLSTTCFHSEEGGQEATPTKAENPLTPTLSGFLESPLKYLDTPTKSLLDTPAKKAQSEFPTCDCVEQIVEKDEGPYYTHLGSGPTVASIRELMEDRYGEKGKAIRIEKVIYTGKEGKSSRGCPIAKWVIRRHTLEEKLLCLVRHRAGHHCQNAVIVILILAWEGIPRSLGDTLYQELTDTLRKYGNPTSRRCGLNDDRTCACQGKDPNTCGASFSFGCSWSMYFNGCKYARSKTPRKFRLTGDNPKEEEVLRNSFQDLATEVAPLYKRLAPQAYQNQVTNEDVAIDCRLGLKEGRPFSGVTACMDFCAHAHKDQHNLYNGCTVVCTLTKEDNRCVGQIPEDEQLHVLPLYKMASTDEFGSEENQNAKVSSGAIQVLTAFPREVRRLPEPAKSCRQRQLEARKAAAEKKKLQKEKLSTPEKIKQEALELAGVTTDPGLSLKGGLSQQSLKPSLKVEPQNHFSSFKYSGNAVVESYSVLGSCRPSDPYSMSSVYSYHSRYAQPGLASVNGFHSKYTLPSFGYYGFPSSNPVFPSQFLGPSAWGHGGSGGSFEKKPDLHALHNSLNPAYGGAEFAELPGQAVATDNHHPIPHHQQPAYPGPKEYLLPKVPQLHPASRDPSPFAQSSSCYNRSIKQEPIDPLTQAESIPRDSAKMSRTPLPEASQNGGPSHLWGQYSGGPSMSPKRTNSVGGNWGVFPPGESPTIVPDKLNSFGASCLTPSHFPESQWGLFTGEGQQSAPHAGARLRGKPWSPCKFGNGTSALTGPSLTEKPWGMGTGDFNPALKGGPGFQDKLWNPVKVEEGRIPTPGANPLDKAWQAFGMPLSSNEKLFGALKSEEKLWDPFSLEEGTAEEPPSKGVVKEEKSGPTVEEDEEELWSDSEHNFLDENIGGVAVAPAHCSILIECARRELHATTPLKKPNRCHPTRISLVFYQHKNLNQPNHGLALWEAKMKQLAERARQRQEEAARLGLGQQEAKLYGKKRKWGGAMVAEPQHKEKKGAIPTRQALAMPTDSAVTVSSYAYTKVTGPYSRWI</sequence>
<proteinExistence type="evidence at protein level"/>
<name>TET3_MOUSE</name>
<gene>
    <name type="primary">Tet3</name>
    <name evidence="19" type="synonym">Cxxc10</name>
</gene>
<protein>
    <recommendedName>
        <fullName>Methylcytosine dioxygenase TET3</fullName>
        <ecNumber evidence="5 8 12 15">1.14.11.80</ecNumber>
    </recommendedName>
</protein>
<organism>
    <name type="scientific">Mus musculus</name>
    <name type="common">Mouse</name>
    <dbReference type="NCBI Taxonomy" id="10090"/>
    <lineage>
        <taxon>Eukaryota</taxon>
        <taxon>Metazoa</taxon>
        <taxon>Chordata</taxon>
        <taxon>Craniata</taxon>
        <taxon>Vertebrata</taxon>
        <taxon>Euteleostomi</taxon>
        <taxon>Mammalia</taxon>
        <taxon>Eutheria</taxon>
        <taxon>Euarchontoglires</taxon>
        <taxon>Glires</taxon>
        <taxon>Rodentia</taxon>
        <taxon>Myomorpha</taxon>
        <taxon>Muroidea</taxon>
        <taxon>Muridae</taxon>
        <taxon>Murinae</taxon>
        <taxon>Mus</taxon>
        <taxon>Mus</taxon>
    </lineage>
</organism>
<feature type="chain" id="PRO_0000340228" description="Methylcytosine dioxygenase TET3">
    <location>
        <begin position="1"/>
        <end position="1803"/>
    </location>
</feature>
<feature type="zinc finger region" description="CXXC-type" evidence="3 15">
    <location>
        <begin position="50"/>
        <end position="90"/>
    </location>
</feature>
<feature type="region of interest" description="Disordered" evidence="4">
    <location>
        <begin position="137"/>
        <end position="167"/>
    </location>
</feature>
<feature type="region of interest" description="Disordered" evidence="4">
    <location>
        <begin position="229"/>
        <end position="251"/>
    </location>
</feature>
<feature type="region of interest" description="Disordered" evidence="4">
    <location>
        <begin position="294"/>
        <end position="328"/>
    </location>
</feature>
<feature type="region of interest" description="Disordered" evidence="4">
    <location>
        <begin position="369"/>
        <end position="460"/>
    </location>
</feature>
<feature type="region of interest" description="Disordered" evidence="4">
    <location>
        <begin position="478"/>
        <end position="614"/>
    </location>
</feature>
<feature type="region of interest" description="Disordered" evidence="4">
    <location>
        <begin position="632"/>
        <end position="712"/>
    </location>
</feature>
<feature type="region of interest" description="Interaction with DNA" evidence="2">
    <location>
        <begin position="993"/>
        <end position="1006"/>
    </location>
</feature>
<feature type="region of interest" description="Disordered" evidence="4">
    <location>
        <begin position="1354"/>
        <end position="1456"/>
    </location>
</feature>
<feature type="region of interest" description="Disordered" evidence="4">
    <location>
        <begin position="1617"/>
        <end position="1639"/>
    </location>
</feature>
<feature type="compositionally biased region" description="Polar residues" evidence="4">
    <location>
        <begin position="369"/>
        <end position="380"/>
    </location>
</feature>
<feature type="compositionally biased region" description="Polar residues" evidence="4">
    <location>
        <begin position="543"/>
        <end position="552"/>
    </location>
</feature>
<feature type="compositionally biased region" description="Polar residues" evidence="4">
    <location>
        <begin position="1393"/>
        <end position="1403"/>
    </location>
</feature>
<feature type="binding site" evidence="3">
    <location>
        <position position="57"/>
    </location>
    <ligand>
        <name>Zn(2+)</name>
        <dbReference type="ChEBI" id="CHEBI:29105"/>
        <label>1</label>
    </ligand>
</feature>
<feature type="binding site" evidence="3">
    <location>
        <position position="60"/>
    </location>
    <ligand>
        <name>Zn(2+)</name>
        <dbReference type="ChEBI" id="CHEBI:29105"/>
        <label>1</label>
    </ligand>
</feature>
<feature type="binding site" evidence="3">
    <location>
        <position position="63"/>
    </location>
    <ligand>
        <name>Zn(2+)</name>
        <dbReference type="ChEBI" id="CHEBI:29105"/>
        <label>1</label>
    </ligand>
</feature>
<feature type="binding site" evidence="3">
    <location>
        <position position="69"/>
    </location>
    <ligand>
        <name>Zn(2+)</name>
        <dbReference type="ChEBI" id="CHEBI:29105"/>
        <label>2</label>
    </ligand>
</feature>
<feature type="binding site" evidence="3">
    <location>
        <position position="72"/>
    </location>
    <ligand>
        <name>Zn(2+)</name>
        <dbReference type="ChEBI" id="CHEBI:29105"/>
        <label>2</label>
    </ligand>
</feature>
<feature type="binding site" evidence="3">
    <location>
        <position position="75"/>
    </location>
    <ligand>
        <name>Zn(2+)</name>
        <dbReference type="ChEBI" id="CHEBI:29105"/>
        <label>2</label>
    </ligand>
</feature>
<feature type="binding site" evidence="3">
    <location>
        <position position="84"/>
    </location>
    <ligand>
        <name>Zn(2+)</name>
        <dbReference type="ChEBI" id="CHEBI:29105"/>
        <label>2</label>
    </ligand>
</feature>
<feature type="binding site" evidence="3">
    <location>
        <position position="89"/>
    </location>
    <ligand>
        <name>Zn(2+)</name>
        <dbReference type="ChEBI" id="CHEBI:29105"/>
        <label>1</label>
    </ligand>
</feature>
<feature type="binding site" evidence="2">
    <location>
        <position position="836"/>
    </location>
    <ligand>
        <name>Zn(2+)</name>
        <dbReference type="ChEBI" id="CHEBI:29105"/>
        <label>3</label>
    </ligand>
</feature>
<feature type="binding site" evidence="2">
    <location>
        <position position="838"/>
    </location>
    <ligand>
        <name>Zn(2+)</name>
        <dbReference type="ChEBI" id="CHEBI:29105"/>
        <label>3</label>
    </ligand>
</feature>
<feature type="binding site" evidence="2">
    <location>
        <position position="896"/>
    </location>
    <ligand>
        <name>Zn(2+)</name>
        <dbReference type="ChEBI" id="CHEBI:29105"/>
        <label>4</label>
    </ligand>
</feature>
<feature type="binding site" evidence="2">
    <location>
        <position position="922"/>
    </location>
    <ligand>
        <name>Zn(2+)</name>
        <dbReference type="ChEBI" id="CHEBI:29105"/>
        <label>1</label>
    </ligand>
</feature>
<feature type="binding site" evidence="2">
    <location>
        <position position="924"/>
    </location>
    <ligand>
        <name>Zn(2+)</name>
        <dbReference type="ChEBI" id="CHEBI:29105"/>
        <label>3</label>
    </ligand>
</feature>
<feature type="binding site" evidence="2">
    <location>
        <position position="964"/>
    </location>
    <ligand>
        <name>2-oxoglutarate</name>
        <dbReference type="ChEBI" id="CHEBI:16810"/>
    </ligand>
</feature>
<feature type="binding site" evidence="2">
    <location>
        <position position="974"/>
    </location>
    <ligand>
        <name>Zn(2+)</name>
        <dbReference type="ChEBI" id="CHEBI:29105"/>
        <label>4</label>
    </ligand>
</feature>
<feature type="binding site" evidence="2">
    <location>
        <position position="976"/>
    </location>
    <ligand>
        <name>Zn(2+)</name>
        <dbReference type="ChEBI" id="CHEBI:29105"/>
        <label>4</label>
    </ligand>
</feature>
<feature type="binding site" evidence="2">
    <location>
        <position position="992"/>
    </location>
    <ligand>
        <name>Zn(2+)</name>
        <dbReference type="ChEBI" id="CHEBI:29105"/>
        <label>3</label>
    </ligand>
</feature>
<feature type="binding site" evidence="2">
    <location>
        <position position="1001"/>
    </location>
    <ligand>
        <name>Zn(2+)</name>
        <dbReference type="ChEBI" id="CHEBI:29105"/>
        <label>3</label>
    </ligand>
</feature>
<feature type="binding site" evidence="2">
    <location>
        <position position="1061"/>
    </location>
    <ligand>
        <name>Zn(2+)</name>
        <dbReference type="ChEBI" id="CHEBI:29105"/>
        <label>3</label>
    </ligand>
</feature>
<feature type="binding site" evidence="2">
    <location>
        <position position="1077"/>
    </location>
    <ligand>
        <name>2-oxoglutarate</name>
        <dbReference type="ChEBI" id="CHEBI:16810"/>
    </ligand>
</feature>
<feature type="binding site" evidence="2">
    <location>
        <position position="1083"/>
    </location>
    <ligand>
        <name>Zn(2+)</name>
        <dbReference type="ChEBI" id="CHEBI:29105"/>
        <label>2</label>
    </ligand>
</feature>
<feature type="binding site" evidence="2">
    <location>
        <position position="1085"/>
    </location>
    <ligand>
        <name>Fe cation</name>
        <dbReference type="ChEBI" id="CHEBI:24875"/>
        <note>catalytic</note>
    </ligand>
</feature>
<feature type="binding site" evidence="2">
    <location>
        <position position="1087"/>
    </location>
    <ligand>
        <name>Fe cation</name>
        <dbReference type="ChEBI" id="CHEBI:24875"/>
        <note>catalytic</note>
    </ligand>
</feature>
<feature type="binding site" evidence="2">
    <location>
        <position position="1090"/>
    </location>
    <ligand>
        <name>substrate</name>
    </ligand>
</feature>
<feature type="binding site" evidence="2">
    <location>
        <position position="1119"/>
    </location>
    <ligand>
        <name>2-oxoglutarate</name>
        <dbReference type="ChEBI" id="CHEBI:16810"/>
    </ligand>
</feature>
<feature type="binding site" evidence="2">
    <location>
        <position position="1681"/>
    </location>
    <ligand>
        <name>Fe cation</name>
        <dbReference type="ChEBI" id="CHEBI:24875"/>
        <note>catalytic</note>
    </ligand>
</feature>
<feature type="binding site" evidence="2">
    <location>
        <begin position="1696"/>
        <end position="1698"/>
    </location>
    <ligand>
        <name>2-oxoglutarate</name>
        <dbReference type="ChEBI" id="CHEBI:16810"/>
    </ligand>
</feature>
<feature type="binding site" evidence="2">
    <location>
        <begin position="1702"/>
        <end position="1704"/>
    </location>
    <ligand>
        <name>substrate</name>
    </ligand>
</feature>
<feature type="binding site" evidence="2">
    <location>
        <position position="1712"/>
    </location>
    <ligand>
        <name>Zn(2+)</name>
        <dbReference type="ChEBI" id="CHEBI:29105"/>
        <label>3</label>
    </ligand>
</feature>
<feature type="modified residue" description="Asymmetric dimethylarginine" evidence="24">
    <location>
        <position position="1271"/>
    </location>
</feature>
<feature type="cross-link" description="Glycyl lysine isopeptide (Lys-Gly) (interchain with G-Cter in SUMO2)" evidence="1">
    <location>
        <position position="490"/>
    </location>
</feature>
<feature type="cross-link" description="Glycyl lysine isopeptide (Lys-Gly) (interchain with G-Cter in ubiquitin)" evidence="14">
    <location>
        <position position="1002"/>
    </location>
</feature>
<feature type="cross-link" description="Glycyl lysine isopeptide (Lys-Gly) (interchain with G-Cter in SUMO2)" evidence="1">
    <location>
        <position position="1196"/>
    </location>
</feature>
<feature type="cross-link" description="Glycyl lysine isopeptide (Lys-Gly) (interchain with G-Cter in SUMO2)" evidence="1">
    <location>
        <position position="1227"/>
    </location>
</feature>
<feature type="cross-link" description="Glycyl lysine isopeptide (Lys-Gly) (interchain with G-Cter in SUMO2)" evidence="1">
    <location>
        <position position="1405"/>
    </location>
</feature>
<feature type="cross-link" description="Glycyl lysine isopeptide (Lys-Gly) (interchain with G-Cter in SUMO2)" evidence="1">
    <location>
        <position position="1569"/>
    </location>
</feature>
<feature type="splice variant" id="VSP_060404" description="In isoform 2." evidence="17">
    <location>
        <begin position="1"/>
        <end position="135"/>
    </location>
</feature>
<feature type="splice variant" id="VSP_060405" description="In isoform 1." evidence="18">
    <location>
        <begin position="102"/>
        <end position="120"/>
    </location>
</feature>
<feature type="splice variant" id="VSP_060406" description="In isoform 2." evidence="17">
    <original>EQIVEKDEGPYYTHL</original>
    <variation>GRWEWSRAFFLSVEH</variation>
    <location>
        <begin position="840"/>
        <end position="854"/>
    </location>
</feature>
<feature type="splice variant" id="VSP_060407" description="In isoform 2." evidence="17">
    <location>
        <begin position="855"/>
        <end position="1803"/>
    </location>
</feature>
<feature type="mutagenesis site" description="Strongly decreases ubiquitination, loss of DNA-binding and of 5-methylcytosine demethylase activity in vivo. Loss of nuclear localization, becomes mostly cytoplasmic." evidence="14">
    <original>K</original>
    <variation>E</variation>
    <location>
        <position position="1002"/>
    </location>
</feature>
<feature type="mutagenesis site" description="Strongly decreases ubiquitination, loss of DNA-binding and of 5-methylcytosine demethylase activity in vivo. Loss of nuclear localization, becomes mostly cytoplasmic." evidence="14">
    <original>K</original>
    <variation>N</variation>
    <location>
        <position position="1002"/>
    </location>
</feature>
<feature type="mutagenesis site" description="Loss of enzyme activity; when associated with A-1087." evidence="5 8">
    <original>H</original>
    <variation>Y</variation>
    <location>
        <position position="1085"/>
    </location>
</feature>
<feature type="mutagenesis site" description="Loss of enzyme activity; when associated with Y-1085." evidence="5 8">
    <original>D</original>
    <variation>A</variation>
    <location>
        <position position="1087"/>
    </location>
</feature>
<feature type="sequence conflict" description="In Ref. 5; AAH96437." evidence="20" ref="5">
    <original>V</original>
    <variation>A</variation>
    <location>
        <position position="1097"/>
    </location>
</feature>
<feature type="helix" evidence="25">
    <location>
        <begin position="61"/>
        <end position="64"/>
    </location>
</feature>
<feature type="strand" evidence="25">
    <location>
        <begin position="70"/>
        <end position="72"/>
    </location>
</feature>
<feature type="helix" evidence="25">
    <location>
        <begin position="73"/>
        <end position="76"/>
    </location>
</feature>
<feature type="turn" evidence="25">
    <location>
        <begin position="85"/>
        <end position="87"/>
    </location>
</feature>
<feature type="helix" evidence="25">
    <location>
        <begin position="91"/>
        <end position="93"/>
    </location>
</feature>
<evidence type="ECO:0000250" key="1">
    <source>
        <dbReference type="UniProtKB" id="O43151"/>
    </source>
</evidence>
<evidence type="ECO:0000250" key="2">
    <source>
        <dbReference type="UniProtKB" id="Q6N021"/>
    </source>
</evidence>
<evidence type="ECO:0000255" key="3">
    <source>
        <dbReference type="PROSITE-ProRule" id="PRU00509"/>
    </source>
</evidence>
<evidence type="ECO:0000256" key="4">
    <source>
        <dbReference type="SAM" id="MobiDB-lite"/>
    </source>
</evidence>
<evidence type="ECO:0000269" key="5">
    <source>
    </source>
</evidence>
<evidence type="ECO:0000269" key="6">
    <source>
    </source>
</evidence>
<evidence type="ECO:0000269" key="7">
    <source>
    </source>
</evidence>
<evidence type="ECO:0000269" key="8">
    <source>
    </source>
</evidence>
<evidence type="ECO:0000269" key="9">
    <source>
    </source>
</evidence>
<evidence type="ECO:0000269" key="10">
    <source>
    </source>
</evidence>
<evidence type="ECO:0000269" key="11">
    <source>
    </source>
</evidence>
<evidence type="ECO:0000269" key="12">
    <source>
    </source>
</evidence>
<evidence type="ECO:0000269" key="13">
    <source>
    </source>
</evidence>
<evidence type="ECO:0000269" key="14">
    <source>
    </source>
</evidence>
<evidence type="ECO:0000269" key="15">
    <source>
    </source>
</evidence>
<evidence type="ECO:0000269" key="16">
    <source>
    </source>
</evidence>
<evidence type="ECO:0000303" key="17">
    <source>
    </source>
</evidence>
<evidence type="ECO:0000303" key="18">
    <source>
    </source>
</evidence>
<evidence type="ECO:0000303" key="19">
    <source>
    </source>
</evidence>
<evidence type="ECO:0000305" key="20"/>
<evidence type="ECO:0000312" key="21">
    <source>
        <dbReference type="EMBL" id="ADR57137.1"/>
    </source>
</evidence>
<evidence type="ECO:0000312" key="22">
    <source>
        <dbReference type="EMBL" id="AGB05430.1"/>
    </source>
</evidence>
<evidence type="ECO:0007744" key="23">
    <source>
        <dbReference type="PDB" id="5EXH"/>
    </source>
</evidence>
<evidence type="ECO:0007744" key="24">
    <source>
    </source>
</evidence>
<evidence type="ECO:0007829" key="25">
    <source>
        <dbReference type="PDB" id="5EXH"/>
    </source>
</evidence>
<dbReference type="EC" id="1.14.11.80" evidence="5 8 12 15"/>
<dbReference type="EMBL" id="HQ423151">
    <property type="protein sequence ID" value="ADR57137.1"/>
    <property type="molecule type" value="mRNA"/>
</dbReference>
<dbReference type="EMBL" id="HQ423152">
    <property type="protein sequence ID" value="ADR57138.1"/>
    <property type="molecule type" value="mRNA"/>
</dbReference>
<dbReference type="EMBL" id="JX946278">
    <property type="protein sequence ID" value="AGB05430.1"/>
    <property type="molecule type" value="mRNA"/>
</dbReference>
<dbReference type="EMBL" id="AK044758">
    <property type="protein sequence ID" value="BAC32068.1"/>
    <property type="molecule type" value="mRNA"/>
</dbReference>
<dbReference type="EMBL" id="AK046543">
    <property type="protein sequence ID" value="BAC32779.1"/>
    <property type="molecule type" value="mRNA"/>
</dbReference>
<dbReference type="EMBL" id="AK046552">
    <property type="protein sequence ID" value="BAC32784.1"/>
    <property type="molecule type" value="mRNA"/>
</dbReference>
<dbReference type="EMBL" id="AK046553">
    <property type="protein sequence ID" value="BAC32785.1"/>
    <property type="molecule type" value="mRNA"/>
</dbReference>
<dbReference type="EMBL" id="GL456132">
    <property type="status" value="NOT_ANNOTATED_CDS"/>
    <property type="molecule type" value="Genomic_DNA"/>
</dbReference>
<dbReference type="EMBL" id="BC096437">
    <property type="protein sequence ID" value="AAH96437.1"/>
    <property type="status" value="ALT_SEQ"/>
    <property type="molecule type" value="mRNA"/>
</dbReference>
<dbReference type="CCDS" id="CCDS85071.1">
    <molecule id="Q8BG87-1"/>
</dbReference>
<dbReference type="RefSeq" id="NP_001334242.1">
    <molecule id="Q8BG87-1"/>
    <property type="nucleotide sequence ID" value="NM_001347313.1"/>
</dbReference>
<dbReference type="RefSeq" id="XP_006505838.1">
    <molecule id="Q8BG87-1"/>
    <property type="nucleotide sequence ID" value="XM_006505775.4"/>
</dbReference>
<dbReference type="RefSeq" id="XP_006505839.1">
    <molecule id="Q8BG87-1"/>
    <property type="nucleotide sequence ID" value="XM_006505776.4"/>
</dbReference>
<dbReference type="RefSeq" id="XP_006505840.1">
    <molecule id="Q8BG87-4"/>
    <property type="nucleotide sequence ID" value="XM_006505777.4"/>
</dbReference>
<dbReference type="RefSeq" id="XP_017176954.1">
    <property type="nucleotide sequence ID" value="XM_017321465.1"/>
</dbReference>
<dbReference type="PDB" id="5EXH">
    <property type="method" value="X-ray"/>
    <property type="resolution" value="1.30 A"/>
    <property type="chains" value="C=51-96"/>
</dbReference>
<dbReference type="PDBsum" id="5EXH"/>
<dbReference type="SMR" id="Q8BG87"/>
<dbReference type="BioGRID" id="228786">
    <property type="interactions" value="3"/>
</dbReference>
<dbReference type="FunCoup" id="Q8BG87">
    <property type="interactions" value="3465"/>
</dbReference>
<dbReference type="IntAct" id="Q8BG87">
    <property type="interactions" value="1"/>
</dbReference>
<dbReference type="MINT" id="Q8BG87"/>
<dbReference type="STRING" id="10090.ENSMUSP00000139630"/>
<dbReference type="GlyGen" id="Q8BG87">
    <property type="glycosylation" value="5 sites, 1 O-linked glycan (2 sites)"/>
</dbReference>
<dbReference type="iPTMnet" id="Q8BG87"/>
<dbReference type="PhosphoSitePlus" id="Q8BG87"/>
<dbReference type="jPOST" id="Q8BG87"/>
<dbReference type="PaxDb" id="10090-ENSMUSP00000087049"/>
<dbReference type="PeptideAtlas" id="Q8BG87"/>
<dbReference type="ProteomicsDB" id="262872">
    <molecule id="Q8BG87-1"/>
</dbReference>
<dbReference type="ProteomicsDB" id="262873">
    <molecule id="Q8BG87-2"/>
</dbReference>
<dbReference type="ProteomicsDB" id="262874">
    <molecule id="Q8BG87-4"/>
</dbReference>
<dbReference type="Antibodypedia" id="31410">
    <property type="antibodies" value="374 antibodies from 30 providers"/>
</dbReference>
<dbReference type="Ensembl" id="ENSMUST00000186548.7">
    <molecule id="Q8BG87-1"/>
    <property type="protein sequence ID" value="ENSMUSP00000139630.2"/>
    <property type="gene ID" value="ENSMUSG00000034832.16"/>
</dbReference>
<dbReference type="GeneID" id="194388"/>
<dbReference type="KEGG" id="mmu:194388"/>
<dbReference type="UCSC" id="uc009cni.2">
    <molecule id="Q8BG87-1"/>
    <property type="organism name" value="mouse"/>
</dbReference>
<dbReference type="UCSC" id="uc009cnl.1">
    <molecule id="Q8BG87-2"/>
    <property type="organism name" value="mouse"/>
</dbReference>
<dbReference type="UCSC" id="uc033isr.1">
    <property type="organism name" value="mouse"/>
</dbReference>
<dbReference type="AGR" id="MGI:2446229"/>
<dbReference type="CTD" id="200424"/>
<dbReference type="MGI" id="MGI:2446229">
    <property type="gene designation" value="Tet3"/>
</dbReference>
<dbReference type="VEuPathDB" id="HostDB:ENSMUSG00000034832"/>
<dbReference type="eggNOG" id="ENOG502QURD">
    <property type="taxonomic scope" value="Eukaryota"/>
</dbReference>
<dbReference type="GeneTree" id="ENSGT00940000157631"/>
<dbReference type="InParanoid" id="Q8BG87"/>
<dbReference type="OMA" id="SVYSCHS"/>
<dbReference type="OrthoDB" id="8854879at2759"/>
<dbReference type="PhylomeDB" id="Q8BG87"/>
<dbReference type="TreeFam" id="TF342373"/>
<dbReference type="BioGRID-ORCS" id="194388">
    <property type="hits" value="1 hit in 63 CRISPR screens"/>
</dbReference>
<dbReference type="ChiTaRS" id="Tet3">
    <property type="organism name" value="mouse"/>
</dbReference>
<dbReference type="PRO" id="PR:Q8BG87"/>
<dbReference type="Proteomes" id="UP000000589">
    <property type="component" value="Chromosome 6"/>
</dbReference>
<dbReference type="RNAct" id="Q8BG87">
    <property type="molecule type" value="protein"/>
</dbReference>
<dbReference type="Bgee" id="ENSMUSG00000034832">
    <property type="expression patterns" value="Expressed in animal zygote and 123 other cell types or tissues"/>
</dbReference>
<dbReference type="ExpressionAtlas" id="Q8BG87">
    <property type="expression patterns" value="baseline and differential"/>
</dbReference>
<dbReference type="GO" id="GO:0005694">
    <property type="term" value="C:chromosome"/>
    <property type="evidence" value="ECO:0007669"/>
    <property type="project" value="UniProtKB-SubCell"/>
</dbReference>
<dbReference type="GO" id="GO:0005737">
    <property type="term" value="C:cytoplasm"/>
    <property type="evidence" value="ECO:0000314"/>
    <property type="project" value="UniProtKB"/>
</dbReference>
<dbReference type="GO" id="GO:0001939">
    <property type="term" value="C:female pronucleus"/>
    <property type="evidence" value="ECO:0000314"/>
    <property type="project" value="MGI"/>
</dbReference>
<dbReference type="GO" id="GO:0001940">
    <property type="term" value="C:male pronucleus"/>
    <property type="evidence" value="ECO:0000314"/>
    <property type="project" value="UniProtKB"/>
</dbReference>
<dbReference type="GO" id="GO:0005654">
    <property type="term" value="C:nucleoplasm"/>
    <property type="evidence" value="ECO:0000304"/>
    <property type="project" value="Reactome"/>
</dbReference>
<dbReference type="GO" id="GO:0005634">
    <property type="term" value="C:nucleus"/>
    <property type="evidence" value="ECO:0000314"/>
    <property type="project" value="MGI"/>
</dbReference>
<dbReference type="GO" id="GO:0070579">
    <property type="term" value="F:5-methylcytosine dioxygenase activity"/>
    <property type="evidence" value="ECO:0000314"/>
    <property type="project" value="MGI"/>
</dbReference>
<dbReference type="GO" id="GO:0008327">
    <property type="term" value="F:methyl-CpG binding"/>
    <property type="evidence" value="ECO:0000250"/>
    <property type="project" value="UniProtKB"/>
</dbReference>
<dbReference type="GO" id="GO:0000978">
    <property type="term" value="F:RNA polymerase II cis-regulatory region sequence-specific DNA binding"/>
    <property type="evidence" value="ECO:0007669"/>
    <property type="project" value="Ensembl"/>
</dbReference>
<dbReference type="GO" id="GO:0008270">
    <property type="term" value="F:zinc ion binding"/>
    <property type="evidence" value="ECO:0000250"/>
    <property type="project" value="UniProtKB"/>
</dbReference>
<dbReference type="GO" id="GO:0141167">
    <property type="term" value="P:chromosomal 5-methylcytosine DNA demethylation, oxidation pathway"/>
    <property type="evidence" value="ECO:0007669"/>
    <property type="project" value="InterPro"/>
</dbReference>
<dbReference type="GO" id="GO:0044727">
    <property type="term" value="P:epigenetic programing of male pronucleus"/>
    <property type="evidence" value="ECO:0000315"/>
    <property type="project" value="UniProtKB"/>
</dbReference>
<dbReference type="GO" id="GO:0044029">
    <property type="term" value="P:positive regulation of gene expression via chromosomal CpG island demethylation"/>
    <property type="evidence" value="ECO:0000314"/>
    <property type="project" value="MGI"/>
</dbReference>
<dbReference type="GO" id="GO:0045944">
    <property type="term" value="P:positive regulation of transcription by RNA polymerase II"/>
    <property type="evidence" value="ECO:0000250"/>
    <property type="project" value="UniProtKB"/>
</dbReference>
<dbReference type="GO" id="GO:0006493">
    <property type="term" value="P:protein O-linked glycosylation"/>
    <property type="evidence" value="ECO:0000250"/>
    <property type="project" value="UniProtKB"/>
</dbReference>
<dbReference type="CDD" id="cd18897">
    <property type="entry name" value="TET3"/>
    <property type="match status" value="1"/>
</dbReference>
<dbReference type="InterPro" id="IPR024779">
    <property type="entry name" value="2OGFeDO_JBP1/TET_oxygenase_dom"/>
</dbReference>
<dbReference type="InterPro" id="IPR040175">
    <property type="entry name" value="TET1/2/3"/>
</dbReference>
<dbReference type="InterPro" id="IPR046942">
    <property type="entry name" value="TET_oxygenase"/>
</dbReference>
<dbReference type="InterPro" id="IPR002857">
    <property type="entry name" value="Znf_CXXC"/>
</dbReference>
<dbReference type="PANTHER" id="PTHR23358">
    <property type="entry name" value="METHYLCYTOSINE DIOXYGENASE TET"/>
    <property type="match status" value="1"/>
</dbReference>
<dbReference type="PANTHER" id="PTHR23358:SF6">
    <property type="entry name" value="METHYLCYTOSINE DIOXYGENASE TET"/>
    <property type="match status" value="1"/>
</dbReference>
<dbReference type="Pfam" id="PF12851">
    <property type="entry name" value="Tet_JBP"/>
    <property type="match status" value="1"/>
</dbReference>
<dbReference type="SMART" id="SM01333">
    <property type="entry name" value="Tet_JBP"/>
    <property type="match status" value="1"/>
</dbReference>
<dbReference type="PROSITE" id="PS51058">
    <property type="entry name" value="ZF_CXXC"/>
    <property type="match status" value="1"/>
</dbReference>